<organism>
    <name type="scientific">Felis catus</name>
    <name type="common">Cat</name>
    <name type="synonym">Felis silvestris catus</name>
    <dbReference type="NCBI Taxonomy" id="9685"/>
    <lineage>
        <taxon>Eukaryota</taxon>
        <taxon>Metazoa</taxon>
        <taxon>Chordata</taxon>
        <taxon>Craniata</taxon>
        <taxon>Vertebrata</taxon>
        <taxon>Euteleostomi</taxon>
        <taxon>Mammalia</taxon>
        <taxon>Eutheria</taxon>
        <taxon>Laurasiatheria</taxon>
        <taxon>Carnivora</taxon>
        <taxon>Feliformia</taxon>
        <taxon>Felidae</taxon>
        <taxon>Felinae</taxon>
        <taxon>Felis</taxon>
    </lineage>
</organism>
<comment type="function">
    <text>Component of the zona pellucida, an extracellular matrix surrounding oocytes which mediates sperm binding, induction of the acrosome reaction and prevents post-fertilization polyspermy. The zona pellucida is composed of 3 to 4 glycoproteins, ZP1, ZP2, ZP3, and ZP4. ZP4 may act as a sperm receptor.</text>
</comment>
<comment type="subcellular location">
    <molecule>Processed zona pellucida sperm-binding protein 4</molecule>
    <subcellularLocation>
        <location evidence="2">Zona pellucida</location>
    </subcellularLocation>
</comment>
<comment type="subcellular location">
    <subcellularLocation>
        <location evidence="2">Cell membrane</location>
        <topology evidence="3">Single-pass type I membrane protein</topology>
    </subcellularLocation>
</comment>
<comment type="tissue specificity">
    <text>Expressed in oocytes.</text>
</comment>
<comment type="domain">
    <text>The ZP domain is involved in the polymerization of the ZP proteins to form the zona pellucida.</text>
</comment>
<comment type="PTM">
    <text>Proteolytically cleaved before the transmembrane segment to yield the secreted ectodomain incorporated in the zona pellucida.</text>
</comment>
<comment type="similarity">
    <text evidence="6">Belongs to the ZP domain family. ZPB subfamily.</text>
</comment>
<sequence>MWLLQPLLLCVPLSLAVHGQQKPQVPDYPGELHCGLQSLQFAINPSPGKATPALIVWDNRGLPHKLQNNSGCGTWVRESPGGSVLLDASYSSCYVNEWVSTTQSPGTSRPPTPASRVTPQDSHYVMIVGVEGTDAAGRRVTNTKVLRCPRNPPDQALVSSLSPSPLQNVALEAPNADLCDSVPKWDRLPCASSPITQGDCNKLGCCYKSEANSCYYGNTVTSRCTQDGHFSIAVSRNVTSPPLLLNSLRLAFGKDRECNPVKATRAFALFFFPFNSCGTTRWVTGDQAVYENELVAARDVRTWSHGSITRDSIFRLRVSCSYSVRSNAFPLSVQVFTIPPPHLKTQHGPLTLELKIAKDKHYGSYYTIGDYPVVKLLRDPIYVEVSIRHRTDPSLGLLLHNCWATPGKNSQSLSQWPILVKGCPYVGDNYQTQLIPVQKALDTPFPSYYKRFSIFTFSFVDTMAKWALRGPVYLHCNVSICQPAGTSSCRITCPVARRRRHSDLHHHSSTASISSKGPMILLQATMDSAEKLHKNSSSPIDSQALWMAGLSGTLIFGFLLVSYLAIRKRR</sequence>
<evidence type="ECO:0000250" key="1"/>
<evidence type="ECO:0000250" key="2">
    <source>
        <dbReference type="UniProtKB" id="Q00193"/>
    </source>
</evidence>
<evidence type="ECO:0000255" key="3"/>
<evidence type="ECO:0000255" key="4">
    <source>
        <dbReference type="PROSITE-ProRule" id="PRU00375"/>
    </source>
</evidence>
<evidence type="ECO:0000255" key="5">
    <source>
        <dbReference type="PROSITE-ProRule" id="PRU00779"/>
    </source>
</evidence>
<evidence type="ECO:0000305" key="6"/>
<accession>P48834</accession>
<proteinExistence type="evidence at transcript level"/>
<protein>
    <recommendedName>
        <fullName>Zona pellucida sperm-binding protein 4</fullName>
    </recommendedName>
    <alternativeName>
        <fullName>Zona pellucida glycoprotein 4</fullName>
        <shortName>Zp-4</shortName>
    </alternativeName>
    <alternativeName>
        <fullName>Zona pellucida protein B</fullName>
    </alternativeName>
    <component>
        <recommendedName>
            <fullName>Processed zona pellucida sperm-binding protein 4</fullName>
        </recommendedName>
    </component>
</protein>
<keyword id="KW-1003">Cell membrane</keyword>
<keyword id="KW-0165">Cleavage on pair of basic residues</keyword>
<keyword id="KW-1015">Disulfide bond</keyword>
<keyword id="KW-0272">Extracellular matrix</keyword>
<keyword id="KW-0278">Fertilization</keyword>
<keyword id="KW-0325">Glycoprotein</keyword>
<keyword id="KW-0472">Membrane</keyword>
<keyword id="KW-0675">Receptor</keyword>
<keyword id="KW-1185">Reference proteome</keyword>
<keyword id="KW-0964">Secreted</keyword>
<keyword id="KW-0732">Signal</keyword>
<keyword id="KW-0812">Transmembrane</keyword>
<keyword id="KW-1133">Transmembrane helix</keyword>
<dbReference type="EMBL" id="U05777">
    <property type="protein sequence ID" value="AAA74389.1"/>
    <property type="molecule type" value="mRNA"/>
</dbReference>
<dbReference type="PIR" id="S70400">
    <property type="entry name" value="S70400"/>
</dbReference>
<dbReference type="RefSeq" id="NP_001009260.1">
    <property type="nucleotide sequence ID" value="NM_001009260.1"/>
</dbReference>
<dbReference type="SMR" id="P48834"/>
<dbReference type="STRING" id="9685.ENSFCAP00000010184"/>
<dbReference type="GlyCosmos" id="P48834">
    <property type="glycosylation" value="5 sites, No reported glycans"/>
</dbReference>
<dbReference type="PaxDb" id="9685-ENSFCAP00000010184"/>
<dbReference type="GeneID" id="493791"/>
<dbReference type="KEGG" id="fca:493791"/>
<dbReference type="CTD" id="57829"/>
<dbReference type="eggNOG" id="ENOG502QU54">
    <property type="taxonomic scope" value="Eukaryota"/>
</dbReference>
<dbReference type="InParanoid" id="P48834"/>
<dbReference type="OrthoDB" id="8919081at2759"/>
<dbReference type="Proteomes" id="UP000011712">
    <property type="component" value="Unplaced"/>
</dbReference>
<dbReference type="GO" id="GO:0062023">
    <property type="term" value="C:collagen-containing extracellular matrix"/>
    <property type="evidence" value="ECO:0000318"/>
    <property type="project" value="GO_Central"/>
</dbReference>
<dbReference type="GO" id="GO:0035805">
    <property type="term" value="C:egg coat"/>
    <property type="evidence" value="ECO:0000250"/>
    <property type="project" value="UniProtKB"/>
</dbReference>
<dbReference type="GO" id="GO:0005576">
    <property type="term" value="C:extracellular region"/>
    <property type="evidence" value="ECO:0007669"/>
    <property type="project" value="UniProtKB-KW"/>
</dbReference>
<dbReference type="GO" id="GO:0005886">
    <property type="term" value="C:plasma membrane"/>
    <property type="evidence" value="ECO:0007669"/>
    <property type="project" value="UniProtKB-SubCell"/>
</dbReference>
<dbReference type="GO" id="GO:0032190">
    <property type="term" value="F:acrosin binding"/>
    <property type="evidence" value="ECO:0000318"/>
    <property type="project" value="GO_Central"/>
</dbReference>
<dbReference type="GO" id="GO:0035804">
    <property type="term" value="F:structural constituent of egg coat"/>
    <property type="evidence" value="ECO:0000250"/>
    <property type="project" value="UniProtKB"/>
</dbReference>
<dbReference type="GO" id="GO:0007339">
    <property type="term" value="P:binding of sperm to zona pellucida"/>
    <property type="evidence" value="ECO:0000318"/>
    <property type="project" value="GO_Central"/>
</dbReference>
<dbReference type="GO" id="GO:0060468">
    <property type="term" value="P:prevention of polyspermy"/>
    <property type="evidence" value="ECO:0000318"/>
    <property type="project" value="GO_Central"/>
</dbReference>
<dbReference type="CDD" id="cd00111">
    <property type="entry name" value="Trefoil"/>
    <property type="match status" value="1"/>
</dbReference>
<dbReference type="FunFam" id="4.10.110.10:FF:000004">
    <property type="entry name" value="zona pellucida sperm-binding protein 4 isoform X1"/>
    <property type="match status" value="1"/>
</dbReference>
<dbReference type="Gene3D" id="4.10.110.10">
    <property type="entry name" value="Spasmolytic Protein, domain 1"/>
    <property type="match status" value="1"/>
</dbReference>
<dbReference type="Gene3D" id="2.60.40.4100">
    <property type="entry name" value="Zona pellucida, ZP-C domain"/>
    <property type="match status" value="1"/>
</dbReference>
<dbReference type="Gene3D" id="2.60.40.3210">
    <property type="entry name" value="Zona pellucida, ZP-N domain"/>
    <property type="match status" value="1"/>
</dbReference>
<dbReference type="InterPro" id="IPR017957">
    <property type="entry name" value="P_trefoil_CS"/>
</dbReference>
<dbReference type="InterPro" id="IPR000519">
    <property type="entry name" value="P_trefoil_dom"/>
</dbReference>
<dbReference type="InterPro" id="IPR044913">
    <property type="entry name" value="P_trefoil_dom_sf"/>
</dbReference>
<dbReference type="InterPro" id="IPR051148">
    <property type="entry name" value="Zona_Pellucida_Domain_gp"/>
</dbReference>
<dbReference type="InterPro" id="IPR055355">
    <property type="entry name" value="ZP-C"/>
</dbReference>
<dbReference type="InterPro" id="IPR042235">
    <property type="entry name" value="ZP-C_dom"/>
</dbReference>
<dbReference type="InterPro" id="IPR055356">
    <property type="entry name" value="ZP-N"/>
</dbReference>
<dbReference type="InterPro" id="IPR054554">
    <property type="entry name" value="ZP1/4_Ig-like"/>
</dbReference>
<dbReference type="InterPro" id="IPR048290">
    <property type="entry name" value="ZP_chr"/>
</dbReference>
<dbReference type="InterPro" id="IPR001507">
    <property type="entry name" value="ZP_dom"/>
</dbReference>
<dbReference type="InterPro" id="IPR017977">
    <property type="entry name" value="ZP_dom_CS"/>
</dbReference>
<dbReference type="PANTHER" id="PTHR23343">
    <property type="entry name" value="ZONA PELLUCIDA SPERM-BINDING PROTEIN"/>
    <property type="match status" value="1"/>
</dbReference>
<dbReference type="PANTHER" id="PTHR23343:SF31">
    <property type="entry name" value="ZONA PELLUCIDA SPERM-BINDING PROTEIN 4"/>
    <property type="match status" value="1"/>
</dbReference>
<dbReference type="Pfam" id="PF00088">
    <property type="entry name" value="Trefoil"/>
    <property type="match status" value="1"/>
</dbReference>
<dbReference type="Pfam" id="PF00100">
    <property type="entry name" value="Zona_pellucida"/>
    <property type="match status" value="1"/>
</dbReference>
<dbReference type="Pfam" id="PF23344">
    <property type="entry name" value="ZP-N"/>
    <property type="match status" value="1"/>
</dbReference>
<dbReference type="Pfam" id="PF22821">
    <property type="entry name" value="ZP1_ZP4_Ig-like"/>
    <property type="match status" value="1"/>
</dbReference>
<dbReference type="PRINTS" id="PR00023">
    <property type="entry name" value="ZPELLUCIDA"/>
</dbReference>
<dbReference type="SMART" id="SM00018">
    <property type="entry name" value="PD"/>
    <property type="match status" value="1"/>
</dbReference>
<dbReference type="SMART" id="SM00241">
    <property type="entry name" value="ZP"/>
    <property type="match status" value="1"/>
</dbReference>
<dbReference type="SUPFAM" id="SSF57492">
    <property type="entry name" value="Trefoil"/>
    <property type="match status" value="1"/>
</dbReference>
<dbReference type="PROSITE" id="PS00025">
    <property type="entry name" value="P_TREFOIL_1"/>
    <property type="match status" value="1"/>
</dbReference>
<dbReference type="PROSITE" id="PS51448">
    <property type="entry name" value="P_TREFOIL_2"/>
    <property type="match status" value="1"/>
</dbReference>
<dbReference type="PROSITE" id="PS00682">
    <property type="entry name" value="ZP_1"/>
    <property type="match status" value="1"/>
</dbReference>
<dbReference type="PROSITE" id="PS51034">
    <property type="entry name" value="ZP_2"/>
    <property type="match status" value="1"/>
</dbReference>
<reference key="1">
    <citation type="journal article" date="1994" name="DNA Seq.">
        <title>Cloning and characterization of zona pellucida genes and cDNAs from a variety of mammalian species: the ZPA, ZPB and ZPC gene families.</title>
        <authorList>
            <person name="Harris J.D."/>
            <person name="Hibler D.W."/>
            <person name="Fontenot G.K."/>
            <person name="Hsu K.T."/>
            <person name="Yurewicz E.C."/>
            <person name="Sacco A.G."/>
        </authorList>
    </citation>
    <scope>NUCLEOTIDE SEQUENCE [MRNA]</scope>
    <source>
        <tissue>Ovary</tissue>
    </source>
</reference>
<gene>
    <name type="primary">ZP4</name>
    <name type="synonym">ZPB</name>
</gene>
<feature type="signal peptide" evidence="3">
    <location>
        <begin position="1"/>
        <end position="19"/>
    </location>
</feature>
<feature type="chain" id="PRO_0000041725" description="Zona pellucida sperm-binding protein 4">
    <location>
        <begin position="20"/>
        <end position="496"/>
    </location>
</feature>
<feature type="chain" id="PRO_0000304577" description="Processed zona pellucida sperm-binding protein 4">
    <location>
        <begin position="20"/>
        <end status="unknown"/>
    </location>
</feature>
<feature type="propeptide" id="PRO_0000041726" description="Removed in mature form" evidence="1">
    <location>
        <begin position="497"/>
        <end position="570"/>
    </location>
</feature>
<feature type="topological domain" description="Extracellular" evidence="3">
    <location>
        <begin position="20"/>
        <end position="545"/>
    </location>
</feature>
<feature type="transmembrane region" description="Helical" evidence="3">
    <location>
        <begin position="546"/>
        <end position="566"/>
    </location>
</feature>
<feature type="topological domain" description="Cytoplasmic" evidence="3">
    <location>
        <begin position="567"/>
        <end position="570"/>
    </location>
</feature>
<feature type="domain" description="P-type" evidence="5">
    <location>
        <begin position="177"/>
        <end position="218"/>
    </location>
</feature>
<feature type="domain" description="ZP" evidence="4">
    <location>
        <begin position="223"/>
        <end position="496"/>
    </location>
</feature>
<feature type="glycosylation site" description="N-linked (GlcNAc...) asparagine" evidence="3">
    <location>
        <position position="68"/>
    </location>
</feature>
<feature type="glycosylation site" description="N-linked (GlcNAc...) asparagine" evidence="1">
    <location>
        <position position="237"/>
    </location>
</feature>
<feature type="glycosylation site" description="O-linked (GalNAc...) threonine" evidence="1">
    <location>
        <position position="337"/>
    </location>
</feature>
<feature type="glycosylation site" description="N-linked (GlcNAc...) asparagine" evidence="3">
    <location>
        <position position="477"/>
    </location>
</feature>
<feature type="glycosylation site" description="N-linked (GlcNAc...) asparagine" evidence="3">
    <location>
        <position position="535"/>
    </location>
</feature>
<feature type="disulfide bond" evidence="5">
    <location>
        <begin position="402"/>
        <end position="476"/>
    </location>
</feature>
<name>ZP4_FELCA</name>